<accession>Q58839</accession>
<feature type="chain" id="PRO_0000154053" description="Flap endonuclease 1">
    <location>
        <begin position="1"/>
        <end position="326"/>
    </location>
</feature>
<feature type="region of interest" description="N-domain">
    <location>
        <begin position="1"/>
        <end position="98"/>
    </location>
</feature>
<feature type="region of interest" description="I-domain">
    <location>
        <begin position="116"/>
        <end position="245"/>
    </location>
</feature>
<feature type="region of interest" description="Interaction with PCNA" evidence="1">
    <location>
        <begin position="317"/>
        <end position="325"/>
    </location>
</feature>
<feature type="binding site" evidence="1">
    <location>
        <position position="27"/>
    </location>
    <ligand>
        <name>Mg(2+)</name>
        <dbReference type="ChEBI" id="CHEBI:18420"/>
        <label>1</label>
    </ligand>
</feature>
<feature type="binding site" evidence="1">
    <location>
        <position position="80"/>
    </location>
    <ligand>
        <name>Mg(2+)</name>
        <dbReference type="ChEBI" id="CHEBI:18420"/>
        <label>1</label>
    </ligand>
</feature>
<feature type="binding site" evidence="2 4">
    <location>
        <position position="152"/>
    </location>
    <ligand>
        <name>Mg(2+)</name>
        <dbReference type="ChEBI" id="CHEBI:18420"/>
        <label>1</label>
    </ligand>
</feature>
<feature type="binding site" evidence="2 3 4">
    <location>
        <position position="154"/>
    </location>
    <ligand>
        <name>Mg(2+)</name>
        <dbReference type="ChEBI" id="CHEBI:18420"/>
        <label>1</label>
    </ligand>
</feature>
<feature type="binding site" evidence="1">
    <location>
        <position position="173"/>
    </location>
    <ligand>
        <name>Mg(2+)</name>
        <dbReference type="ChEBI" id="CHEBI:18420"/>
        <label>2</label>
    </ligand>
</feature>
<feature type="binding site" evidence="1">
    <location>
        <position position="175"/>
    </location>
    <ligand>
        <name>Mg(2+)</name>
        <dbReference type="ChEBI" id="CHEBI:18420"/>
        <label>2</label>
    </ligand>
</feature>
<feature type="binding site" evidence="2 3 4">
    <location>
        <position position="224"/>
    </location>
    <ligand>
        <name>Mg(2+)</name>
        <dbReference type="ChEBI" id="CHEBI:18420"/>
        <label>2</label>
    </ligand>
</feature>
<feature type="helix" evidence="5">
    <location>
        <begin position="6"/>
        <end position="8"/>
    </location>
</feature>
<feature type="helix" evidence="5">
    <location>
        <begin position="17"/>
        <end position="19"/>
    </location>
</feature>
<feature type="strand" evidence="5">
    <location>
        <begin position="23"/>
        <end position="27"/>
    </location>
</feature>
<feature type="helix" evidence="5">
    <location>
        <begin position="28"/>
        <end position="38"/>
    </location>
</feature>
<feature type="helix" evidence="5">
    <location>
        <begin position="56"/>
        <end position="70"/>
    </location>
</feature>
<feature type="strand" evidence="5">
    <location>
        <begin position="74"/>
        <end position="79"/>
    </location>
</feature>
<feature type="strand" evidence="5">
    <location>
        <begin position="96"/>
        <end position="98"/>
    </location>
</feature>
<feature type="helix" evidence="5">
    <location>
        <begin position="111"/>
        <end position="115"/>
    </location>
</feature>
<feature type="helix" evidence="5">
    <location>
        <begin position="121"/>
        <end position="124"/>
    </location>
</feature>
<feature type="helix" evidence="5">
    <location>
        <begin position="129"/>
        <end position="142"/>
    </location>
</feature>
<feature type="strand" evidence="5">
    <location>
        <begin position="146"/>
        <end position="148"/>
    </location>
</feature>
<feature type="helix" evidence="5">
    <location>
        <begin position="153"/>
        <end position="162"/>
    </location>
</feature>
<feature type="strand" evidence="5">
    <location>
        <begin position="165"/>
        <end position="170"/>
    </location>
</feature>
<feature type="strand" evidence="5">
    <location>
        <begin position="172"/>
        <end position="174"/>
    </location>
</feature>
<feature type="helix" evidence="5">
    <location>
        <begin position="175"/>
        <end position="179"/>
    </location>
</feature>
<feature type="strand" evidence="5">
    <location>
        <begin position="182"/>
        <end position="190"/>
    </location>
</feature>
<feature type="strand" evidence="5">
    <location>
        <begin position="196"/>
        <end position="199"/>
    </location>
</feature>
<feature type="helix" evidence="5">
    <location>
        <begin position="200"/>
        <end position="207"/>
    </location>
</feature>
<feature type="helix" evidence="5">
    <location>
        <begin position="211"/>
        <end position="221"/>
    </location>
</feature>
<feature type="turn" evidence="5">
    <location>
        <begin position="227"/>
        <end position="232"/>
    </location>
</feature>
<feature type="helix" evidence="5">
    <location>
        <begin position="235"/>
        <end position="243"/>
    </location>
</feature>
<feature type="helix" evidence="5">
    <location>
        <begin position="247"/>
        <end position="254"/>
    </location>
</feature>
<feature type="helix" evidence="5">
    <location>
        <begin position="258"/>
        <end position="266"/>
    </location>
</feature>
<feature type="helix" evidence="5">
    <location>
        <begin position="283"/>
        <end position="290"/>
    </location>
</feature>
<feature type="turn" evidence="5">
    <location>
        <begin position="291"/>
        <end position="294"/>
    </location>
</feature>
<feature type="helix" evidence="5">
    <location>
        <begin position="298"/>
        <end position="315"/>
    </location>
</feature>
<comment type="function">
    <text>Structure-specific nuclease with 5'-flap endonuclease and 5'-3' exonuclease activities involved in DNA replication and repair. During DNA replication, cleaves the 5'-overhanging flap structure that is generated by displacement synthesis when DNA polymerase encounters the 5'-end of a downstream Okazaki fragment. Binds the unpaired 3'-DNA end and kinks the DNA to facilitate 5' cleavage specificity. Cleaves one nucleotide into the double-stranded DNA from the junction in flap DNA, leaving a nick for ligation. Also involved in the base excision repair (BER) pathway. Acts as a genome stabilization factor that prevents flaps from equilibrating into structures that lead to duplications and deletions. Also possesses 5'-3' exonuclease activity on nicked or gapped double-stranded DNA.</text>
</comment>
<comment type="cofactor">
    <cofactor evidence="1">
        <name>Mg(2+)</name>
        <dbReference type="ChEBI" id="CHEBI:18420"/>
    </cofactor>
    <text evidence="1">Binds 2 magnesium ions per subunit. They probably participate in the reaction catalyzed by the enzyme. May bind an additional third magnesium ion after substrate binding.</text>
</comment>
<comment type="biophysicochemical properties">
    <phDependence>
        <text>Optimum pH is 6-7.</text>
    </phDependence>
</comment>
<comment type="subunit">
    <text>Interacts with PCNA. PCNA stimulates the nuclease activity without altering cleavage specificity.</text>
</comment>
<comment type="similarity">
    <text evidence="1">Belongs to the XPG/RAD2 endonuclease family. FEN1 subfamily.</text>
</comment>
<gene>
    <name evidence="1" type="primary">fen</name>
    <name type="ordered locus">MJ1444</name>
</gene>
<keyword id="KW-0002">3D-structure</keyword>
<keyword id="KW-0227">DNA damage</keyword>
<keyword id="KW-0234">DNA repair</keyword>
<keyword id="KW-0235">DNA replication</keyword>
<keyword id="KW-0255">Endonuclease</keyword>
<keyword id="KW-0269">Exonuclease</keyword>
<keyword id="KW-0378">Hydrolase</keyword>
<keyword id="KW-0460">Magnesium</keyword>
<keyword id="KW-0479">Metal-binding</keyword>
<keyword id="KW-0540">Nuclease</keyword>
<keyword id="KW-1185">Reference proteome</keyword>
<organism>
    <name type="scientific">Methanocaldococcus jannaschii (strain ATCC 43067 / DSM 2661 / JAL-1 / JCM 10045 / NBRC 100440)</name>
    <name type="common">Methanococcus jannaschii</name>
    <dbReference type="NCBI Taxonomy" id="243232"/>
    <lineage>
        <taxon>Archaea</taxon>
        <taxon>Methanobacteriati</taxon>
        <taxon>Methanobacteriota</taxon>
        <taxon>Methanomada group</taxon>
        <taxon>Methanococci</taxon>
        <taxon>Methanococcales</taxon>
        <taxon>Methanocaldococcaceae</taxon>
        <taxon>Methanocaldococcus</taxon>
    </lineage>
</organism>
<sequence>MGVQFGDFIPKNIISFEDLKGKKVAIDGMNALYQFLTSIRLRDGSPLRNRKGEITSAYNGVFYKTIHLLENDITPIWVFDGEPPKLKEKTRKVRREMKEKAELKMKEAIKKEDFEEAAKYAKRVSYLTPKMVENCKYLLSLMGIPYVEAPSEGEAQASYMAKKGDVWAVVSQDYDALLYGAPRVVRNLTTTKEMPELIELNEVLEDLRISLDDLIDIAIFMGTDYNPGGVKGIGFKRAYELVRSGVAKDVLKKEVEYYDEIKRIFKEPKVTDNYSLSLKLPDKEGIIKFLVDENDFNYDRVKKHVDKLYNLIANKTKQKTLDAWFK</sequence>
<evidence type="ECO:0000255" key="1">
    <source>
        <dbReference type="HAMAP-Rule" id="MF_00614"/>
    </source>
</evidence>
<evidence type="ECO:0000269" key="2">
    <source>
    </source>
</evidence>
<evidence type="ECO:0007744" key="3">
    <source>
        <dbReference type="PDB" id="1A76"/>
    </source>
</evidence>
<evidence type="ECO:0007744" key="4">
    <source>
        <dbReference type="PDB" id="1A77"/>
    </source>
</evidence>
<evidence type="ECO:0007829" key="5">
    <source>
        <dbReference type="PDB" id="1A76"/>
    </source>
</evidence>
<proteinExistence type="evidence at protein level"/>
<protein>
    <recommendedName>
        <fullName evidence="1">Flap endonuclease 1</fullName>
        <shortName evidence="1">FEN-1</shortName>
        <ecNumber evidence="1">3.1.-.-</ecNumber>
    </recommendedName>
    <alternativeName>
        <fullName evidence="1">Flap structure-specific endonuclease 1</fullName>
    </alternativeName>
</protein>
<name>FEN_METJA</name>
<dbReference type="EC" id="3.1.-.-" evidence="1"/>
<dbReference type="EMBL" id="L77117">
    <property type="protein sequence ID" value="AAB99454.1"/>
    <property type="molecule type" value="Genomic_DNA"/>
</dbReference>
<dbReference type="PIR" id="C64480">
    <property type="entry name" value="C64480"/>
</dbReference>
<dbReference type="RefSeq" id="WP_010870964.1">
    <property type="nucleotide sequence ID" value="NC_000909.1"/>
</dbReference>
<dbReference type="PDB" id="1A76">
    <property type="method" value="X-ray"/>
    <property type="resolution" value="2.00 A"/>
    <property type="chains" value="A=1-326"/>
</dbReference>
<dbReference type="PDB" id="1A77">
    <property type="method" value="X-ray"/>
    <property type="resolution" value="2.00 A"/>
    <property type="chains" value="A=1-326"/>
</dbReference>
<dbReference type="PDBsum" id="1A76"/>
<dbReference type="PDBsum" id="1A77"/>
<dbReference type="SMR" id="Q58839"/>
<dbReference type="FunCoup" id="Q58839">
    <property type="interactions" value="174"/>
</dbReference>
<dbReference type="STRING" id="243232.MJ_1444"/>
<dbReference type="PaxDb" id="243232-MJ_1444"/>
<dbReference type="EnsemblBacteria" id="AAB99454">
    <property type="protein sequence ID" value="AAB99454"/>
    <property type="gene ID" value="MJ_1444"/>
</dbReference>
<dbReference type="GeneID" id="1452348"/>
<dbReference type="KEGG" id="mja:MJ_1444"/>
<dbReference type="eggNOG" id="arCOG04050">
    <property type="taxonomic scope" value="Archaea"/>
</dbReference>
<dbReference type="HOGENOM" id="CLU_032444_0_0_2"/>
<dbReference type="InParanoid" id="Q58839"/>
<dbReference type="OrthoDB" id="9593at2157"/>
<dbReference type="PhylomeDB" id="Q58839"/>
<dbReference type="BRENDA" id="3.1.99.B1">
    <property type="organism ID" value="3260"/>
</dbReference>
<dbReference type="EvolutionaryTrace" id="Q58839"/>
<dbReference type="Proteomes" id="UP000000805">
    <property type="component" value="Chromosome"/>
</dbReference>
<dbReference type="GO" id="GO:0008409">
    <property type="term" value="F:5'-3' exonuclease activity"/>
    <property type="evidence" value="ECO:0007669"/>
    <property type="project" value="UniProtKB-UniRule"/>
</dbReference>
<dbReference type="GO" id="GO:0017108">
    <property type="term" value="F:5'-flap endonuclease activity"/>
    <property type="evidence" value="ECO:0000318"/>
    <property type="project" value="GO_Central"/>
</dbReference>
<dbReference type="GO" id="GO:0003677">
    <property type="term" value="F:DNA binding"/>
    <property type="evidence" value="ECO:0007669"/>
    <property type="project" value="UniProtKB-UniRule"/>
</dbReference>
<dbReference type="GO" id="GO:0000287">
    <property type="term" value="F:magnesium ion binding"/>
    <property type="evidence" value="ECO:0007669"/>
    <property type="project" value="UniProtKB-UniRule"/>
</dbReference>
<dbReference type="GO" id="GO:0006281">
    <property type="term" value="P:DNA repair"/>
    <property type="evidence" value="ECO:0007669"/>
    <property type="project" value="UniProtKB-UniRule"/>
</dbReference>
<dbReference type="GO" id="GO:0043137">
    <property type="term" value="P:DNA replication, removal of RNA primer"/>
    <property type="evidence" value="ECO:0007669"/>
    <property type="project" value="UniProtKB-UniRule"/>
</dbReference>
<dbReference type="CDD" id="cd09903">
    <property type="entry name" value="H3TH_FEN1-Arc"/>
    <property type="match status" value="1"/>
</dbReference>
<dbReference type="CDD" id="cd09867">
    <property type="entry name" value="PIN_FEN1"/>
    <property type="match status" value="1"/>
</dbReference>
<dbReference type="FunFam" id="3.40.50.1010:FF:000016">
    <property type="entry name" value="Flap endonuclease 1"/>
    <property type="match status" value="1"/>
</dbReference>
<dbReference type="Gene3D" id="1.10.150.20">
    <property type="entry name" value="5' to 3' exonuclease, C-terminal subdomain"/>
    <property type="match status" value="1"/>
</dbReference>
<dbReference type="Gene3D" id="3.40.50.1010">
    <property type="entry name" value="5'-nuclease"/>
    <property type="match status" value="1"/>
</dbReference>
<dbReference type="HAMAP" id="MF_00614">
    <property type="entry name" value="Fen"/>
    <property type="match status" value="1"/>
</dbReference>
<dbReference type="InterPro" id="IPR036279">
    <property type="entry name" value="5-3_exonuclease_C_sf"/>
</dbReference>
<dbReference type="InterPro" id="IPR023426">
    <property type="entry name" value="Flap_endonuc"/>
</dbReference>
<dbReference type="InterPro" id="IPR019973">
    <property type="entry name" value="Flap_endonuc_arc"/>
</dbReference>
<dbReference type="InterPro" id="IPR008918">
    <property type="entry name" value="HhH2"/>
</dbReference>
<dbReference type="InterPro" id="IPR029060">
    <property type="entry name" value="PIN-like_dom_sf"/>
</dbReference>
<dbReference type="InterPro" id="IPR006086">
    <property type="entry name" value="XPG-I_dom"/>
</dbReference>
<dbReference type="InterPro" id="IPR006084">
    <property type="entry name" value="XPG/Rad2"/>
</dbReference>
<dbReference type="InterPro" id="IPR006085">
    <property type="entry name" value="XPG_DNA_repair_N"/>
</dbReference>
<dbReference type="NCBIfam" id="TIGR03674">
    <property type="entry name" value="fen_arch"/>
    <property type="match status" value="1"/>
</dbReference>
<dbReference type="PANTHER" id="PTHR11081:SF9">
    <property type="entry name" value="FLAP ENDONUCLEASE 1"/>
    <property type="match status" value="1"/>
</dbReference>
<dbReference type="PANTHER" id="PTHR11081">
    <property type="entry name" value="FLAP ENDONUCLEASE FAMILY MEMBER"/>
    <property type="match status" value="1"/>
</dbReference>
<dbReference type="Pfam" id="PF00867">
    <property type="entry name" value="XPG_I"/>
    <property type="match status" value="1"/>
</dbReference>
<dbReference type="Pfam" id="PF00752">
    <property type="entry name" value="XPG_N"/>
    <property type="match status" value="1"/>
</dbReference>
<dbReference type="PRINTS" id="PR00853">
    <property type="entry name" value="XPGRADSUPER"/>
</dbReference>
<dbReference type="SMART" id="SM00279">
    <property type="entry name" value="HhH2"/>
    <property type="match status" value="1"/>
</dbReference>
<dbReference type="SMART" id="SM00484">
    <property type="entry name" value="XPGI"/>
    <property type="match status" value="1"/>
</dbReference>
<dbReference type="SMART" id="SM00485">
    <property type="entry name" value="XPGN"/>
    <property type="match status" value="1"/>
</dbReference>
<dbReference type="SUPFAM" id="SSF47807">
    <property type="entry name" value="5' to 3' exonuclease, C-terminal subdomain"/>
    <property type="match status" value="1"/>
</dbReference>
<dbReference type="SUPFAM" id="SSF88723">
    <property type="entry name" value="PIN domain-like"/>
    <property type="match status" value="1"/>
</dbReference>
<reference key="1">
    <citation type="journal article" date="1996" name="Science">
        <title>Complete genome sequence of the methanogenic archaeon, Methanococcus jannaschii.</title>
        <authorList>
            <person name="Bult C.J."/>
            <person name="White O."/>
            <person name="Olsen G.J."/>
            <person name="Zhou L."/>
            <person name="Fleischmann R.D."/>
            <person name="Sutton G.G."/>
            <person name="Blake J.A."/>
            <person name="FitzGerald L.M."/>
            <person name="Clayton R.A."/>
            <person name="Gocayne J.D."/>
            <person name="Kerlavage A.R."/>
            <person name="Dougherty B.A."/>
            <person name="Tomb J.-F."/>
            <person name="Adams M.D."/>
            <person name="Reich C.I."/>
            <person name="Overbeek R."/>
            <person name="Kirkness E.F."/>
            <person name="Weinstock K.G."/>
            <person name="Merrick J.M."/>
            <person name="Glodek A."/>
            <person name="Scott J.L."/>
            <person name="Geoghagen N.S.M."/>
            <person name="Weidman J.F."/>
            <person name="Fuhrmann J.L."/>
            <person name="Nguyen D."/>
            <person name="Utterback T.R."/>
            <person name="Kelley J.M."/>
            <person name="Peterson J.D."/>
            <person name="Sadow P.W."/>
            <person name="Hanna M.C."/>
            <person name="Cotton M.D."/>
            <person name="Roberts K.M."/>
            <person name="Hurst M.A."/>
            <person name="Kaine B.P."/>
            <person name="Borodovsky M."/>
            <person name="Klenk H.-P."/>
            <person name="Fraser C.M."/>
            <person name="Smith H.O."/>
            <person name="Woese C.R."/>
            <person name="Venter J.C."/>
        </authorList>
    </citation>
    <scope>NUCLEOTIDE SEQUENCE [LARGE SCALE GENOMIC DNA]</scope>
    <source>
        <strain>ATCC 43067 / DSM 2661 / JAL-1 / JCM 10045 / NBRC 100440</strain>
    </source>
</reference>
<reference key="2">
    <citation type="journal article" date="1998" name="J. Bacteriol.">
        <title>Methanococcus jannaschii flap endonuclease: expression, purification, and substrate requirements.</title>
        <authorList>
            <person name="Rao H.G."/>
            <person name="Rosenfeld A."/>
            <person name="Wetmur J.G."/>
        </authorList>
    </citation>
    <scope>CHARACTERIZATION</scope>
</reference>
<reference key="3">
    <citation type="journal article" date="1999" name="Mol. Cells">
        <title>Expression, purification, characterization and crystallization of flap endonuclease-1 from Methanococcus jannaschii.</title>
        <authorList>
            <person name="Bae K.W."/>
            <person name="Baek K.W."/>
            <person name="Cho C.S."/>
            <person name="Hwang K.Y."/>
            <person name="Kim H.-R."/>
            <person name="Sung H.-C."/>
            <person name="Cho Y."/>
        </authorList>
    </citation>
    <scope>CHARACTERIZATION</scope>
    <scope>X-RAY CRYSTALLOGRAPHY (2.0 ANGSTROMS)</scope>
</reference>
<reference key="4">
    <citation type="journal article" date="1998" name="Nat. Struct. Biol.">
        <title>The crystal structure of flap endonuclease-1 from Methanococcus jannaschii.</title>
        <authorList>
            <person name="Hwang K.Y."/>
            <person name="Baek K."/>
            <person name="Kim H.-Y."/>
            <person name="Cho Y."/>
        </authorList>
    </citation>
    <scope>X-RAY CRYSTALLOGRAPHY (2.00 ANGSTROMS) IN COMPLEX WITH MAGNESIUM IONS</scope>
    <source>
        <strain>ATCC 43067 / DSM 2661 / JAL-1 / JCM 10045 / NBRC 100440</strain>
    </source>
</reference>